<name>RS16_THERP</name>
<feature type="chain" id="PRO_1000134332" description="Small ribosomal subunit protein bS16">
    <location>
        <begin position="1"/>
        <end position="99"/>
    </location>
</feature>
<feature type="region of interest" description="Disordered" evidence="2">
    <location>
        <begin position="80"/>
        <end position="99"/>
    </location>
</feature>
<dbReference type="EMBL" id="CP001275">
    <property type="protein sequence ID" value="ACM05058.1"/>
    <property type="molecule type" value="Genomic_DNA"/>
</dbReference>
<dbReference type="RefSeq" id="WP_012641528.1">
    <property type="nucleotide sequence ID" value="NC_011959.1"/>
</dbReference>
<dbReference type="SMR" id="B9KXC8"/>
<dbReference type="STRING" id="309801.trd_0114"/>
<dbReference type="KEGG" id="tro:trd_0114"/>
<dbReference type="eggNOG" id="COG0228">
    <property type="taxonomic scope" value="Bacteria"/>
</dbReference>
<dbReference type="HOGENOM" id="CLU_100590_5_2_0"/>
<dbReference type="OrthoDB" id="9807878at2"/>
<dbReference type="Proteomes" id="UP000000447">
    <property type="component" value="Chromosome"/>
</dbReference>
<dbReference type="GO" id="GO:0005737">
    <property type="term" value="C:cytoplasm"/>
    <property type="evidence" value="ECO:0007669"/>
    <property type="project" value="UniProtKB-ARBA"/>
</dbReference>
<dbReference type="GO" id="GO:0015935">
    <property type="term" value="C:small ribosomal subunit"/>
    <property type="evidence" value="ECO:0007669"/>
    <property type="project" value="TreeGrafter"/>
</dbReference>
<dbReference type="GO" id="GO:0003735">
    <property type="term" value="F:structural constituent of ribosome"/>
    <property type="evidence" value="ECO:0007669"/>
    <property type="project" value="InterPro"/>
</dbReference>
<dbReference type="GO" id="GO:0006412">
    <property type="term" value="P:translation"/>
    <property type="evidence" value="ECO:0007669"/>
    <property type="project" value="UniProtKB-UniRule"/>
</dbReference>
<dbReference type="Gene3D" id="3.30.1320.10">
    <property type="match status" value="1"/>
</dbReference>
<dbReference type="HAMAP" id="MF_00385">
    <property type="entry name" value="Ribosomal_bS16"/>
    <property type="match status" value="1"/>
</dbReference>
<dbReference type="InterPro" id="IPR000307">
    <property type="entry name" value="Ribosomal_bS16"/>
</dbReference>
<dbReference type="InterPro" id="IPR023803">
    <property type="entry name" value="Ribosomal_bS16_dom_sf"/>
</dbReference>
<dbReference type="NCBIfam" id="TIGR00002">
    <property type="entry name" value="S16"/>
    <property type="match status" value="1"/>
</dbReference>
<dbReference type="PANTHER" id="PTHR12919">
    <property type="entry name" value="30S RIBOSOMAL PROTEIN S16"/>
    <property type="match status" value="1"/>
</dbReference>
<dbReference type="PANTHER" id="PTHR12919:SF20">
    <property type="entry name" value="SMALL RIBOSOMAL SUBUNIT PROTEIN BS16M"/>
    <property type="match status" value="1"/>
</dbReference>
<dbReference type="Pfam" id="PF00886">
    <property type="entry name" value="Ribosomal_S16"/>
    <property type="match status" value="1"/>
</dbReference>
<dbReference type="SUPFAM" id="SSF54565">
    <property type="entry name" value="Ribosomal protein S16"/>
    <property type="match status" value="1"/>
</dbReference>
<accession>B9KXC8</accession>
<reference key="1">
    <citation type="journal article" date="2009" name="PLoS ONE">
        <title>Complete genome sequence of the aerobic CO-oxidizing thermophile Thermomicrobium roseum.</title>
        <authorList>
            <person name="Wu D."/>
            <person name="Raymond J."/>
            <person name="Wu M."/>
            <person name="Chatterji S."/>
            <person name="Ren Q."/>
            <person name="Graham J.E."/>
            <person name="Bryant D.A."/>
            <person name="Robb F."/>
            <person name="Colman A."/>
            <person name="Tallon L.J."/>
            <person name="Badger J.H."/>
            <person name="Madupu R."/>
            <person name="Ward N.L."/>
            <person name="Eisen J.A."/>
        </authorList>
    </citation>
    <scope>NUCLEOTIDE SEQUENCE [LARGE SCALE GENOMIC DNA]</scope>
    <source>
        <strain>ATCC 27502 / DSM 5159 / P-2</strain>
    </source>
</reference>
<gene>
    <name evidence="1" type="primary">rpsP</name>
    <name type="ordered locus">trd_0114</name>
</gene>
<protein>
    <recommendedName>
        <fullName evidence="1">Small ribosomal subunit protein bS16</fullName>
    </recommendedName>
    <alternativeName>
        <fullName evidence="3">30S ribosomal protein S16</fullName>
    </alternativeName>
</protein>
<comment type="similarity">
    <text evidence="1">Belongs to the bacterial ribosomal protein bS16 family.</text>
</comment>
<organism>
    <name type="scientific">Thermomicrobium roseum (strain ATCC 27502 / DSM 5159 / P-2)</name>
    <dbReference type="NCBI Taxonomy" id="309801"/>
    <lineage>
        <taxon>Bacteria</taxon>
        <taxon>Pseudomonadati</taxon>
        <taxon>Thermomicrobiota</taxon>
        <taxon>Thermomicrobia</taxon>
        <taxon>Thermomicrobiales</taxon>
        <taxon>Thermomicrobiaceae</taxon>
        <taxon>Thermomicrobium</taxon>
    </lineage>
</organism>
<keyword id="KW-1185">Reference proteome</keyword>
<keyword id="KW-0687">Ribonucleoprotein</keyword>
<keyword id="KW-0689">Ribosomal protein</keyword>
<evidence type="ECO:0000255" key="1">
    <source>
        <dbReference type="HAMAP-Rule" id="MF_00385"/>
    </source>
</evidence>
<evidence type="ECO:0000256" key="2">
    <source>
        <dbReference type="SAM" id="MobiDB-lite"/>
    </source>
</evidence>
<evidence type="ECO:0000305" key="3"/>
<sequence>MIKLRLRRMGKKRQPHYRIVAAEARWPRDGRFIEVIGYYNPRTDPYTLEVNVERARWWLEHGAQPTDTVRALLVRAGVLPPRQQNEAKRETAETAQPEA</sequence>
<proteinExistence type="inferred from homology"/>